<accession>A2SJA7</accession>
<gene>
    <name evidence="1" type="primary">serS</name>
    <name type="ordered locus">Mpe_A2692</name>
</gene>
<dbReference type="EC" id="6.1.1.11" evidence="1"/>
<dbReference type="EMBL" id="CP000555">
    <property type="protein sequence ID" value="ABM95646.1"/>
    <property type="molecule type" value="Genomic_DNA"/>
</dbReference>
<dbReference type="RefSeq" id="WP_011830276.1">
    <property type="nucleotide sequence ID" value="NC_008825.1"/>
</dbReference>
<dbReference type="SMR" id="A2SJA7"/>
<dbReference type="STRING" id="420662.Mpe_A2692"/>
<dbReference type="KEGG" id="mpt:Mpe_A2692"/>
<dbReference type="eggNOG" id="COG0172">
    <property type="taxonomic scope" value="Bacteria"/>
</dbReference>
<dbReference type="HOGENOM" id="CLU_023797_1_1_4"/>
<dbReference type="UniPathway" id="UPA00906">
    <property type="reaction ID" value="UER00895"/>
</dbReference>
<dbReference type="Proteomes" id="UP000000366">
    <property type="component" value="Chromosome"/>
</dbReference>
<dbReference type="GO" id="GO:0005737">
    <property type="term" value="C:cytoplasm"/>
    <property type="evidence" value="ECO:0007669"/>
    <property type="project" value="UniProtKB-SubCell"/>
</dbReference>
<dbReference type="GO" id="GO:0005524">
    <property type="term" value="F:ATP binding"/>
    <property type="evidence" value="ECO:0007669"/>
    <property type="project" value="UniProtKB-UniRule"/>
</dbReference>
<dbReference type="GO" id="GO:0004828">
    <property type="term" value="F:serine-tRNA ligase activity"/>
    <property type="evidence" value="ECO:0007669"/>
    <property type="project" value="UniProtKB-UniRule"/>
</dbReference>
<dbReference type="GO" id="GO:0016260">
    <property type="term" value="P:selenocysteine biosynthetic process"/>
    <property type="evidence" value="ECO:0007669"/>
    <property type="project" value="UniProtKB-UniRule"/>
</dbReference>
<dbReference type="GO" id="GO:0006434">
    <property type="term" value="P:seryl-tRNA aminoacylation"/>
    <property type="evidence" value="ECO:0007669"/>
    <property type="project" value="UniProtKB-UniRule"/>
</dbReference>
<dbReference type="CDD" id="cd00770">
    <property type="entry name" value="SerRS_core"/>
    <property type="match status" value="1"/>
</dbReference>
<dbReference type="Gene3D" id="3.30.930.10">
    <property type="entry name" value="Bira Bifunctional Protein, Domain 2"/>
    <property type="match status" value="1"/>
</dbReference>
<dbReference type="Gene3D" id="1.10.287.40">
    <property type="entry name" value="Serine-tRNA synthetase, tRNA binding domain"/>
    <property type="match status" value="1"/>
</dbReference>
<dbReference type="HAMAP" id="MF_00176">
    <property type="entry name" value="Ser_tRNA_synth_type1"/>
    <property type="match status" value="1"/>
</dbReference>
<dbReference type="InterPro" id="IPR002314">
    <property type="entry name" value="aa-tRNA-synt_IIb"/>
</dbReference>
<dbReference type="InterPro" id="IPR006195">
    <property type="entry name" value="aa-tRNA-synth_II"/>
</dbReference>
<dbReference type="InterPro" id="IPR045864">
    <property type="entry name" value="aa-tRNA-synth_II/BPL/LPL"/>
</dbReference>
<dbReference type="InterPro" id="IPR002317">
    <property type="entry name" value="Ser-tRNA-ligase_type_1"/>
</dbReference>
<dbReference type="InterPro" id="IPR015866">
    <property type="entry name" value="Ser-tRNA-synth_1_N"/>
</dbReference>
<dbReference type="InterPro" id="IPR042103">
    <property type="entry name" value="SerRS_1_N_sf"/>
</dbReference>
<dbReference type="InterPro" id="IPR033729">
    <property type="entry name" value="SerRS_core"/>
</dbReference>
<dbReference type="InterPro" id="IPR010978">
    <property type="entry name" value="tRNA-bd_arm"/>
</dbReference>
<dbReference type="NCBIfam" id="TIGR00414">
    <property type="entry name" value="serS"/>
    <property type="match status" value="1"/>
</dbReference>
<dbReference type="PANTHER" id="PTHR43697:SF1">
    <property type="entry name" value="SERINE--TRNA LIGASE"/>
    <property type="match status" value="1"/>
</dbReference>
<dbReference type="PANTHER" id="PTHR43697">
    <property type="entry name" value="SERYL-TRNA SYNTHETASE"/>
    <property type="match status" value="1"/>
</dbReference>
<dbReference type="Pfam" id="PF02403">
    <property type="entry name" value="Seryl_tRNA_N"/>
    <property type="match status" value="1"/>
</dbReference>
<dbReference type="Pfam" id="PF00587">
    <property type="entry name" value="tRNA-synt_2b"/>
    <property type="match status" value="1"/>
</dbReference>
<dbReference type="PIRSF" id="PIRSF001529">
    <property type="entry name" value="Ser-tRNA-synth_IIa"/>
    <property type="match status" value="1"/>
</dbReference>
<dbReference type="PRINTS" id="PR00981">
    <property type="entry name" value="TRNASYNTHSER"/>
</dbReference>
<dbReference type="SUPFAM" id="SSF55681">
    <property type="entry name" value="Class II aaRS and biotin synthetases"/>
    <property type="match status" value="1"/>
</dbReference>
<dbReference type="SUPFAM" id="SSF46589">
    <property type="entry name" value="tRNA-binding arm"/>
    <property type="match status" value="1"/>
</dbReference>
<dbReference type="PROSITE" id="PS50862">
    <property type="entry name" value="AA_TRNA_LIGASE_II"/>
    <property type="match status" value="1"/>
</dbReference>
<keyword id="KW-0030">Aminoacyl-tRNA synthetase</keyword>
<keyword id="KW-0067">ATP-binding</keyword>
<keyword id="KW-0963">Cytoplasm</keyword>
<keyword id="KW-0436">Ligase</keyword>
<keyword id="KW-0547">Nucleotide-binding</keyword>
<keyword id="KW-0648">Protein biosynthesis</keyword>
<keyword id="KW-1185">Reference proteome</keyword>
<evidence type="ECO:0000255" key="1">
    <source>
        <dbReference type="HAMAP-Rule" id="MF_00176"/>
    </source>
</evidence>
<reference key="1">
    <citation type="journal article" date="2007" name="J. Bacteriol.">
        <title>Whole-genome analysis of the methyl tert-butyl ether-degrading beta-proteobacterium Methylibium petroleiphilum PM1.</title>
        <authorList>
            <person name="Kane S.R."/>
            <person name="Chakicherla A.Y."/>
            <person name="Chain P.S.G."/>
            <person name="Schmidt R."/>
            <person name="Shin M.W."/>
            <person name="Legler T.C."/>
            <person name="Scow K.M."/>
            <person name="Larimer F.W."/>
            <person name="Lucas S.M."/>
            <person name="Richardson P.M."/>
            <person name="Hristova K.R."/>
        </authorList>
    </citation>
    <scope>NUCLEOTIDE SEQUENCE [LARGE SCALE GENOMIC DNA]</scope>
    <source>
        <strain>ATCC BAA-1232 / LMG 22953 / PM1</strain>
    </source>
</reference>
<name>SYS_METPP</name>
<comment type="function">
    <text evidence="1">Catalyzes the attachment of serine to tRNA(Ser). Is also able to aminoacylate tRNA(Sec) with serine, to form the misacylated tRNA L-seryl-tRNA(Sec), which will be further converted into selenocysteinyl-tRNA(Sec).</text>
</comment>
<comment type="catalytic activity">
    <reaction evidence="1">
        <text>tRNA(Ser) + L-serine + ATP = L-seryl-tRNA(Ser) + AMP + diphosphate + H(+)</text>
        <dbReference type="Rhea" id="RHEA:12292"/>
        <dbReference type="Rhea" id="RHEA-COMP:9669"/>
        <dbReference type="Rhea" id="RHEA-COMP:9703"/>
        <dbReference type="ChEBI" id="CHEBI:15378"/>
        <dbReference type="ChEBI" id="CHEBI:30616"/>
        <dbReference type="ChEBI" id="CHEBI:33019"/>
        <dbReference type="ChEBI" id="CHEBI:33384"/>
        <dbReference type="ChEBI" id="CHEBI:78442"/>
        <dbReference type="ChEBI" id="CHEBI:78533"/>
        <dbReference type="ChEBI" id="CHEBI:456215"/>
        <dbReference type="EC" id="6.1.1.11"/>
    </reaction>
</comment>
<comment type="catalytic activity">
    <reaction evidence="1">
        <text>tRNA(Sec) + L-serine + ATP = L-seryl-tRNA(Sec) + AMP + diphosphate + H(+)</text>
        <dbReference type="Rhea" id="RHEA:42580"/>
        <dbReference type="Rhea" id="RHEA-COMP:9742"/>
        <dbReference type="Rhea" id="RHEA-COMP:10128"/>
        <dbReference type="ChEBI" id="CHEBI:15378"/>
        <dbReference type="ChEBI" id="CHEBI:30616"/>
        <dbReference type="ChEBI" id="CHEBI:33019"/>
        <dbReference type="ChEBI" id="CHEBI:33384"/>
        <dbReference type="ChEBI" id="CHEBI:78442"/>
        <dbReference type="ChEBI" id="CHEBI:78533"/>
        <dbReference type="ChEBI" id="CHEBI:456215"/>
        <dbReference type="EC" id="6.1.1.11"/>
    </reaction>
</comment>
<comment type="pathway">
    <text evidence="1">Aminoacyl-tRNA biosynthesis; selenocysteinyl-tRNA(Sec) biosynthesis; L-seryl-tRNA(Sec) from L-serine and tRNA(Sec): step 1/1.</text>
</comment>
<comment type="subunit">
    <text evidence="1">Homodimer. The tRNA molecule binds across the dimer.</text>
</comment>
<comment type="subcellular location">
    <subcellularLocation>
        <location evidence="1">Cytoplasm</location>
    </subcellularLocation>
</comment>
<comment type="domain">
    <text evidence="1">Consists of two distinct domains, a catalytic core and a N-terminal extension that is involved in tRNA binding.</text>
</comment>
<comment type="similarity">
    <text evidence="1">Belongs to the class-II aminoacyl-tRNA synthetase family. Type-1 seryl-tRNA synthetase subfamily.</text>
</comment>
<sequence length="432" mass="47304">MLDINLLRKDLEGVVARLETRKSPQPFLDVERFTALEAERKAIQTRTEELQARRNSLSKQIGQLKAKGEDTAAVMAEVGGIGDGLKASAERLEVIQSELNALLMALPNLPQAGVPVGADEHANVEVRRWGQPRALDFAPKDHVDLGAPLGLDFETGAKLSGARFSFLRGPVARLHRALAQFMLDVQTQEHGYTECYTPYIVNREVLEGTGQLPKFEADMFWVTRGGDDDEATTQYLISTSEISLTNSVREQVLAADQLPIKLTAHSPCFRSEAGSAGRDTRGMIRQHQFDKVEMVQITTAEQSDAALEAMVGHAEAVLQKLELPYRVITLCTGDMGFGAAKTYDLEVWLPAQNTYREISSCSNCEAFQARRMQTRYKTAQGKNELVHTLNGSGLAVGRALVAVLENGQNADGSITIPAALRPYLGGLERLVA</sequence>
<organism>
    <name type="scientific">Methylibium petroleiphilum (strain ATCC BAA-1232 / LMG 22953 / PM1)</name>
    <dbReference type="NCBI Taxonomy" id="420662"/>
    <lineage>
        <taxon>Bacteria</taxon>
        <taxon>Pseudomonadati</taxon>
        <taxon>Pseudomonadota</taxon>
        <taxon>Betaproteobacteria</taxon>
        <taxon>Burkholderiales</taxon>
        <taxon>Sphaerotilaceae</taxon>
        <taxon>Methylibium</taxon>
    </lineage>
</organism>
<proteinExistence type="inferred from homology"/>
<feature type="chain" id="PRO_1000019731" description="Serine--tRNA ligase">
    <location>
        <begin position="1"/>
        <end position="432"/>
    </location>
</feature>
<feature type="binding site" evidence="1">
    <location>
        <begin position="239"/>
        <end position="241"/>
    </location>
    <ligand>
        <name>L-serine</name>
        <dbReference type="ChEBI" id="CHEBI:33384"/>
    </ligand>
</feature>
<feature type="binding site" evidence="1">
    <location>
        <begin position="270"/>
        <end position="272"/>
    </location>
    <ligand>
        <name>ATP</name>
        <dbReference type="ChEBI" id="CHEBI:30616"/>
    </ligand>
</feature>
<feature type="binding site" evidence="1">
    <location>
        <position position="293"/>
    </location>
    <ligand>
        <name>L-serine</name>
        <dbReference type="ChEBI" id="CHEBI:33384"/>
    </ligand>
</feature>
<feature type="binding site" evidence="1">
    <location>
        <begin position="357"/>
        <end position="360"/>
    </location>
    <ligand>
        <name>ATP</name>
        <dbReference type="ChEBI" id="CHEBI:30616"/>
    </ligand>
</feature>
<feature type="binding site" evidence="1">
    <location>
        <position position="392"/>
    </location>
    <ligand>
        <name>L-serine</name>
        <dbReference type="ChEBI" id="CHEBI:33384"/>
    </ligand>
</feature>
<protein>
    <recommendedName>
        <fullName evidence="1">Serine--tRNA ligase</fullName>
        <ecNumber evidence="1">6.1.1.11</ecNumber>
    </recommendedName>
    <alternativeName>
        <fullName evidence="1">Seryl-tRNA synthetase</fullName>
        <shortName evidence="1">SerRS</shortName>
    </alternativeName>
    <alternativeName>
        <fullName evidence="1">Seryl-tRNA(Ser/Sec) synthetase</fullName>
    </alternativeName>
</protein>